<gene>
    <name evidence="1" type="primary">mdtA</name>
    <name type="ordered locus">XBJ1_2730</name>
</gene>
<reference key="1">
    <citation type="journal article" date="2011" name="PLoS ONE">
        <title>The entomopathogenic bacterial endosymbionts xenorhabdus and photorhabdus: convergent lifestyles from divergent genomes.</title>
        <authorList>
            <person name="Chaston J.M."/>
            <person name="Suen G."/>
            <person name="Tucker S.L."/>
            <person name="Andersen A.W."/>
            <person name="Bhasin A."/>
            <person name="Bode E."/>
            <person name="Bode H.B."/>
            <person name="Brachmann A.O."/>
            <person name="Cowles C.E."/>
            <person name="Cowles K.N."/>
            <person name="Darby C."/>
            <person name="de Leon L."/>
            <person name="Drace K."/>
            <person name="Du Z."/>
            <person name="Givaudan A."/>
            <person name="Herbert Tran E.E."/>
            <person name="Jewell K.A."/>
            <person name="Knack J.J."/>
            <person name="Krasomil-Osterfeld K.C."/>
            <person name="Kukor R."/>
            <person name="Lanois A."/>
            <person name="Latreille P."/>
            <person name="Leimgruber N.K."/>
            <person name="Lipke C.M."/>
            <person name="Liu R."/>
            <person name="Lu X."/>
            <person name="Martens E.C."/>
            <person name="Marri P.R."/>
            <person name="Medigue C."/>
            <person name="Menard M.L."/>
            <person name="Miller N.M."/>
            <person name="Morales-Soto N."/>
            <person name="Norton S."/>
            <person name="Ogier J.C."/>
            <person name="Orchard S.S."/>
            <person name="Park D."/>
            <person name="Park Y."/>
            <person name="Qurollo B.A."/>
            <person name="Sugar D.R."/>
            <person name="Richards G.R."/>
            <person name="Rouy Z."/>
            <person name="Slominski B."/>
            <person name="Slominski K."/>
            <person name="Snyder H."/>
            <person name="Tjaden B.C."/>
            <person name="van der Hoeven R."/>
            <person name="Welch R.D."/>
            <person name="Wheeler C."/>
            <person name="Xiang B."/>
            <person name="Barbazuk B."/>
            <person name="Gaudriault S."/>
            <person name="Goodner B."/>
            <person name="Slater S.C."/>
            <person name="Forst S."/>
            <person name="Goldman B.S."/>
            <person name="Goodrich-Blair H."/>
        </authorList>
    </citation>
    <scope>NUCLEOTIDE SEQUENCE [LARGE SCALE GENOMIC DNA]</scope>
    <source>
        <strain>SS-2004</strain>
    </source>
</reference>
<protein>
    <recommendedName>
        <fullName evidence="1">Multidrug resistance protein MdtA</fullName>
    </recommendedName>
    <alternativeName>
        <fullName evidence="1">Multidrug transporter MdtA</fullName>
    </alternativeName>
</protein>
<keyword id="KW-0997">Cell inner membrane</keyword>
<keyword id="KW-1003">Cell membrane</keyword>
<keyword id="KW-0472">Membrane</keyword>
<keyword id="KW-0732">Signal</keyword>
<keyword id="KW-0813">Transport</keyword>
<dbReference type="EMBL" id="FN667741">
    <property type="protein sequence ID" value="CBJ81854.1"/>
    <property type="molecule type" value="Genomic_DNA"/>
</dbReference>
<dbReference type="RefSeq" id="WP_012989140.1">
    <property type="nucleotide sequence ID" value="NC_013892.1"/>
</dbReference>
<dbReference type="SMR" id="D3V7P2"/>
<dbReference type="STRING" id="406818.XBJ1_2730"/>
<dbReference type="KEGG" id="xbo:XBJ1_2730"/>
<dbReference type="PATRIC" id="fig|406818.4.peg.2464"/>
<dbReference type="eggNOG" id="COG0845">
    <property type="taxonomic scope" value="Bacteria"/>
</dbReference>
<dbReference type="HOGENOM" id="CLU_018816_2_0_6"/>
<dbReference type="Proteomes" id="UP000002045">
    <property type="component" value="Chromosome"/>
</dbReference>
<dbReference type="GO" id="GO:1990281">
    <property type="term" value="C:efflux pump complex"/>
    <property type="evidence" value="ECO:0007669"/>
    <property type="project" value="TreeGrafter"/>
</dbReference>
<dbReference type="GO" id="GO:0005886">
    <property type="term" value="C:plasma membrane"/>
    <property type="evidence" value="ECO:0007669"/>
    <property type="project" value="UniProtKB-SubCell"/>
</dbReference>
<dbReference type="GO" id="GO:0015562">
    <property type="term" value="F:efflux transmembrane transporter activity"/>
    <property type="evidence" value="ECO:0007669"/>
    <property type="project" value="TreeGrafter"/>
</dbReference>
<dbReference type="GO" id="GO:0009636">
    <property type="term" value="P:response to toxic substance"/>
    <property type="evidence" value="ECO:0007669"/>
    <property type="project" value="UniProtKB-ARBA"/>
</dbReference>
<dbReference type="FunFam" id="2.40.420.20:FF:000001">
    <property type="entry name" value="Efflux RND transporter periplasmic adaptor subunit"/>
    <property type="match status" value="1"/>
</dbReference>
<dbReference type="Gene3D" id="2.40.30.170">
    <property type="match status" value="1"/>
</dbReference>
<dbReference type="Gene3D" id="2.40.420.20">
    <property type="match status" value="1"/>
</dbReference>
<dbReference type="Gene3D" id="2.40.50.100">
    <property type="match status" value="1"/>
</dbReference>
<dbReference type="Gene3D" id="1.10.287.470">
    <property type="entry name" value="Helix hairpin bin"/>
    <property type="match status" value="1"/>
</dbReference>
<dbReference type="HAMAP" id="MF_01422">
    <property type="entry name" value="MdtA"/>
    <property type="match status" value="1"/>
</dbReference>
<dbReference type="InterPro" id="IPR032317">
    <property type="entry name" value="CusB_D23"/>
</dbReference>
<dbReference type="InterPro" id="IPR022824">
    <property type="entry name" value="Multidrug-R_MdtA"/>
</dbReference>
<dbReference type="InterPro" id="IPR006143">
    <property type="entry name" value="RND_pump_MFP"/>
</dbReference>
<dbReference type="NCBIfam" id="NF008589">
    <property type="entry name" value="PRK11556.1"/>
    <property type="match status" value="1"/>
</dbReference>
<dbReference type="NCBIfam" id="TIGR01730">
    <property type="entry name" value="RND_mfp"/>
    <property type="match status" value="1"/>
</dbReference>
<dbReference type="PANTHER" id="PTHR30469">
    <property type="entry name" value="MULTIDRUG RESISTANCE PROTEIN MDTA"/>
    <property type="match status" value="1"/>
</dbReference>
<dbReference type="PANTHER" id="PTHR30469:SF12">
    <property type="entry name" value="MULTIDRUG RESISTANCE PROTEIN MDTA"/>
    <property type="match status" value="1"/>
</dbReference>
<dbReference type="Pfam" id="PF16576">
    <property type="entry name" value="HlyD_D23"/>
    <property type="match status" value="1"/>
</dbReference>
<dbReference type="SUPFAM" id="SSF111369">
    <property type="entry name" value="HlyD-like secretion proteins"/>
    <property type="match status" value="1"/>
</dbReference>
<sequence>MKNKRRTYFFQFAVLAVVIATAYFAWNYFKASTISEEKSAQASKSLQDLKYLLQPPVQVATAKIQSVPHYLGGLGTVQAANTVTVTSLVAGQLTALHFDEGQFVKQGDLLAEIDPRSFQIQLAKVQGQYAKDQATLANSRQDLVRYQQLAKNKSISQQDLDKQISTVRQYEALLKADQSSIDDARLQLTYSRITAPISGRVGLKKIDVGNYISAGGGTPLVIITQVDPIDVLFALPENDISAVLKAQKNNKDVVVTAWDRNNQQQLAQGKLLSIDNLIDVTTGTIKMKARFDNQNNVLFPNQFVNIQIKVNTLENAIVIPNAALQMSSEGHYVWKVDKENKVNKRKVTIGLQNAQLVVISKGLATGDRVVTDGTDALTEGTGITIVKPLKSESANTYDQMDKSKPSNSKVENT</sequence>
<accession>D3V7P2</accession>
<organism>
    <name type="scientific">Xenorhabdus bovienii (strain SS-2004)</name>
    <name type="common">Xenorhabdus nematophila subsp. bovienii</name>
    <dbReference type="NCBI Taxonomy" id="406818"/>
    <lineage>
        <taxon>Bacteria</taxon>
        <taxon>Pseudomonadati</taxon>
        <taxon>Pseudomonadota</taxon>
        <taxon>Gammaproteobacteria</taxon>
        <taxon>Enterobacterales</taxon>
        <taxon>Morganellaceae</taxon>
        <taxon>Xenorhabdus</taxon>
    </lineage>
</organism>
<feature type="signal peptide" evidence="1">
    <location>
        <begin position="1"/>
        <end position="25"/>
    </location>
</feature>
<feature type="chain" id="PRO_0000414049" description="Multidrug resistance protein MdtA">
    <location>
        <begin position="26"/>
        <end position="413"/>
    </location>
</feature>
<feature type="region of interest" description="Disordered" evidence="2">
    <location>
        <begin position="394"/>
        <end position="413"/>
    </location>
</feature>
<proteinExistence type="inferred from homology"/>
<comment type="subunit">
    <text evidence="1">Part of a tripartite efflux system composed of MdtA, MdtB and MdtC.</text>
</comment>
<comment type="subcellular location">
    <subcellularLocation>
        <location evidence="1">Cell inner membrane</location>
        <topology evidence="1">Peripheral membrane protein</topology>
    </subcellularLocation>
</comment>
<comment type="similarity">
    <text evidence="1">Belongs to the membrane fusion protein (MFP) (TC 8.A.1) family.</text>
</comment>
<evidence type="ECO:0000255" key="1">
    <source>
        <dbReference type="HAMAP-Rule" id="MF_01422"/>
    </source>
</evidence>
<evidence type="ECO:0000256" key="2">
    <source>
        <dbReference type="SAM" id="MobiDB-lite"/>
    </source>
</evidence>
<name>MDTA_XENBS</name>